<gene>
    <name type="primary">ARF</name>
</gene>
<feature type="initiator methionine" description="Removed" evidence="2">
    <location>
        <position position="1"/>
    </location>
</feature>
<feature type="chain" id="PRO_0000207439" description="ADP-ribosylation factor">
    <location>
        <begin position="2"/>
        <end position="181"/>
    </location>
</feature>
<feature type="binding site" evidence="1">
    <location>
        <begin position="24"/>
        <end position="31"/>
    </location>
    <ligand>
        <name>GTP</name>
        <dbReference type="ChEBI" id="CHEBI:37565"/>
    </ligand>
</feature>
<feature type="binding site" evidence="1">
    <location>
        <begin position="67"/>
        <end position="71"/>
    </location>
    <ligand>
        <name>GTP</name>
        <dbReference type="ChEBI" id="CHEBI:37565"/>
    </ligand>
</feature>
<feature type="binding site" evidence="1">
    <location>
        <begin position="126"/>
        <end position="129"/>
    </location>
    <ligand>
        <name>GTP</name>
        <dbReference type="ChEBI" id="CHEBI:37565"/>
    </ligand>
</feature>
<feature type="lipid moiety-binding region" description="N-myristoyl glycine" evidence="2">
    <location>
        <position position="2"/>
    </location>
</feature>
<protein>
    <recommendedName>
        <fullName>ADP-ribosylation factor</fullName>
    </recommendedName>
</protein>
<sequence length="181" mass="20667">MGLSFTKLFSRLFAKKEMRILMVGLDAAGKTTILYKLKLGEIVTTIPTIGFNVETVEYKNISFTVWDVGGQDKIRPLWRHYFQNTQGLIFVVDSNDRDRVVEARDELHRMLNEDELRDAVLLVFANKQDLPNAMNAAEITDKLGLHSLRQRHWYIQSTCATSGEGLYEGLEWLSNNIASKA</sequence>
<keyword id="KW-0931">ER-Golgi transport</keyword>
<keyword id="KW-0333">Golgi apparatus</keyword>
<keyword id="KW-0342">GTP-binding</keyword>
<keyword id="KW-0449">Lipoprotein</keyword>
<keyword id="KW-0519">Myristate</keyword>
<keyword id="KW-0547">Nucleotide-binding</keyword>
<keyword id="KW-0653">Protein transport</keyword>
<keyword id="KW-0813">Transport</keyword>
<comment type="function">
    <text>GTP-binding protein involved in protein trafficking; may modulate vesicle budding and uncoating within the Golgi apparatus.</text>
</comment>
<comment type="subcellular location">
    <subcellularLocation>
        <location>Golgi apparatus</location>
    </subcellularLocation>
</comment>
<comment type="similarity">
    <text evidence="3">Belongs to the small GTPase superfamily. Arf family.</text>
</comment>
<name>ARF_VIGUN</name>
<organism>
    <name type="scientific">Vigna unguiculata</name>
    <name type="common">Cowpea</name>
    <dbReference type="NCBI Taxonomy" id="3917"/>
    <lineage>
        <taxon>Eukaryota</taxon>
        <taxon>Viridiplantae</taxon>
        <taxon>Streptophyta</taxon>
        <taxon>Embryophyta</taxon>
        <taxon>Tracheophyta</taxon>
        <taxon>Spermatophyta</taxon>
        <taxon>Magnoliopsida</taxon>
        <taxon>eudicotyledons</taxon>
        <taxon>Gunneridae</taxon>
        <taxon>Pentapetalae</taxon>
        <taxon>rosids</taxon>
        <taxon>fabids</taxon>
        <taxon>Fabales</taxon>
        <taxon>Fabaceae</taxon>
        <taxon>Papilionoideae</taxon>
        <taxon>50 kb inversion clade</taxon>
        <taxon>NPAAA clade</taxon>
        <taxon>indigoferoid/millettioid clade</taxon>
        <taxon>Phaseoleae</taxon>
        <taxon>Vigna</taxon>
    </lineage>
</organism>
<proteinExistence type="evidence at transcript level"/>
<evidence type="ECO:0000250" key="1"/>
<evidence type="ECO:0000255" key="2"/>
<evidence type="ECO:0000305" key="3"/>
<reference key="1">
    <citation type="submission" date="1997-09" db="EMBL/GenBank/DDBJ databases">
        <authorList>
            <person name="Lee H.J."/>
            <person name="Park Y.I."/>
        </authorList>
    </citation>
    <scope>NUCLEOTIDE SEQUENCE [MRNA]</scope>
</reference>
<dbReference type="EMBL" id="AF022389">
    <property type="protein sequence ID" value="AAB91395.1"/>
    <property type="molecule type" value="mRNA"/>
</dbReference>
<dbReference type="RefSeq" id="NP_001362976.1">
    <property type="nucleotide sequence ID" value="NM_001376047.1"/>
</dbReference>
<dbReference type="SMR" id="O48920"/>
<dbReference type="EnsemblPlants" id="Vigun04g194400.1.v1.2">
    <property type="protein sequence ID" value="Vigun04g194400.1.v1.2"/>
    <property type="gene ID" value="Vigun04g194400.v1.2"/>
</dbReference>
<dbReference type="GeneID" id="114181803"/>
<dbReference type="Gramene" id="Vigun04g194400.1.v1.2">
    <property type="protein sequence ID" value="Vigun04g194400.1.v1.2"/>
    <property type="gene ID" value="Vigun04g194400.v1.2"/>
</dbReference>
<dbReference type="OrthoDB" id="1841414at2759"/>
<dbReference type="GO" id="GO:0005794">
    <property type="term" value="C:Golgi apparatus"/>
    <property type="evidence" value="ECO:0007669"/>
    <property type="project" value="UniProtKB-SubCell"/>
</dbReference>
<dbReference type="GO" id="GO:0005525">
    <property type="term" value="F:GTP binding"/>
    <property type="evidence" value="ECO:0007669"/>
    <property type="project" value="UniProtKB-KW"/>
</dbReference>
<dbReference type="GO" id="GO:0003924">
    <property type="term" value="F:GTPase activity"/>
    <property type="evidence" value="ECO:0007669"/>
    <property type="project" value="InterPro"/>
</dbReference>
<dbReference type="GO" id="GO:0015031">
    <property type="term" value="P:protein transport"/>
    <property type="evidence" value="ECO:0007669"/>
    <property type="project" value="UniProtKB-KW"/>
</dbReference>
<dbReference type="GO" id="GO:0016192">
    <property type="term" value="P:vesicle-mediated transport"/>
    <property type="evidence" value="ECO:0007669"/>
    <property type="project" value="UniProtKB-KW"/>
</dbReference>
<dbReference type="CDD" id="cd04150">
    <property type="entry name" value="Arf1_5_like"/>
    <property type="match status" value="1"/>
</dbReference>
<dbReference type="FunFam" id="3.40.50.300:FF:003500">
    <property type="entry name" value="ADP-ribosylation factor 1"/>
    <property type="match status" value="1"/>
</dbReference>
<dbReference type="Gene3D" id="3.40.50.300">
    <property type="entry name" value="P-loop containing nucleotide triphosphate hydrolases"/>
    <property type="match status" value="1"/>
</dbReference>
<dbReference type="InterPro" id="IPR045872">
    <property type="entry name" value="Arf1-5-like"/>
</dbReference>
<dbReference type="InterPro" id="IPR027417">
    <property type="entry name" value="P-loop_NTPase"/>
</dbReference>
<dbReference type="InterPro" id="IPR005225">
    <property type="entry name" value="Small_GTP-bd"/>
</dbReference>
<dbReference type="InterPro" id="IPR024156">
    <property type="entry name" value="Small_GTPase_ARF"/>
</dbReference>
<dbReference type="InterPro" id="IPR006689">
    <property type="entry name" value="Small_GTPase_ARF/SAR"/>
</dbReference>
<dbReference type="NCBIfam" id="TIGR00231">
    <property type="entry name" value="small_GTP"/>
    <property type="match status" value="1"/>
</dbReference>
<dbReference type="PANTHER" id="PTHR11711">
    <property type="entry name" value="ADP RIBOSYLATION FACTOR-RELATED"/>
    <property type="match status" value="1"/>
</dbReference>
<dbReference type="Pfam" id="PF00025">
    <property type="entry name" value="Arf"/>
    <property type="match status" value="1"/>
</dbReference>
<dbReference type="PRINTS" id="PR00328">
    <property type="entry name" value="SAR1GTPBP"/>
</dbReference>
<dbReference type="SMART" id="SM00177">
    <property type="entry name" value="ARF"/>
    <property type="match status" value="1"/>
</dbReference>
<dbReference type="SMART" id="SM00175">
    <property type="entry name" value="RAB"/>
    <property type="match status" value="1"/>
</dbReference>
<dbReference type="SMART" id="SM00178">
    <property type="entry name" value="SAR"/>
    <property type="match status" value="1"/>
</dbReference>
<dbReference type="SUPFAM" id="SSF52540">
    <property type="entry name" value="P-loop containing nucleoside triphosphate hydrolases"/>
    <property type="match status" value="1"/>
</dbReference>
<dbReference type="PROSITE" id="PS51417">
    <property type="entry name" value="ARF"/>
    <property type="match status" value="1"/>
</dbReference>
<accession>O48920</accession>